<gene>
    <name evidence="1" type="primary">bioB</name>
    <name type="ordered locus">Nham_0277</name>
</gene>
<organism>
    <name type="scientific">Nitrobacter hamburgensis (strain DSM 10229 / NCIMB 13809 / X14)</name>
    <dbReference type="NCBI Taxonomy" id="323097"/>
    <lineage>
        <taxon>Bacteria</taxon>
        <taxon>Pseudomonadati</taxon>
        <taxon>Pseudomonadota</taxon>
        <taxon>Alphaproteobacteria</taxon>
        <taxon>Hyphomicrobiales</taxon>
        <taxon>Nitrobacteraceae</taxon>
        <taxon>Nitrobacter</taxon>
    </lineage>
</organism>
<evidence type="ECO:0000255" key="1">
    <source>
        <dbReference type="HAMAP-Rule" id="MF_01694"/>
    </source>
</evidence>
<evidence type="ECO:0000255" key="2">
    <source>
        <dbReference type="PROSITE-ProRule" id="PRU01266"/>
    </source>
</evidence>
<evidence type="ECO:0000256" key="3">
    <source>
        <dbReference type="SAM" id="MobiDB-lite"/>
    </source>
</evidence>
<keyword id="KW-0001">2Fe-2S</keyword>
<keyword id="KW-0004">4Fe-4S</keyword>
<keyword id="KW-0093">Biotin biosynthesis</keyword>
<keyword id="KW-0408">Iron</keyword>
<keyword id="KW-0411">Iron-sulfur</keyword>
<keyword id="KW-0479">Metal-binding</keyword>
<keyword id="KW-1185">Reference proteome</keyword>
<keyword id="KW-0949">S-adenosyl-L-methionine</keyword>
<keyword id="KW-0808">Transferase</keyword>
<name>BIOB_NITHX</name>
<accession>Q1QRH1</accession>
<protein>
    <recommendedName>
        <fullName evidence="1">Biotin synthase</fullName>
        <ecNumber evidence="1">2.8.1.6</ecNumber>
    </recommendedName>
</protein>
<proteinExistence type="inferred from homology"/>
<dbReference type="EC" id="2.8.1.6" evidence="1"/>
<dbReference type="EMBL" id="CP000319">
    <property type="protein sequence ID" value="ABE61176.1"/>
    <property type="molecule type" value="Genomic_DNA"/>
</dbReference>
<dbReference type="RefSeq" id="WP_011508880.1">
    <property type="nucleotide sequence ID" value="NC_007964.1"/>
</dbReference>
<dbReference type="SMR" id="Q1QRH1"/>
<dbReference type="STRING" id="323097.Nham_0277"/>
<dbReference type="KEGG" id="nha:Nham_0277"/>
<dbReference type="eggNOG" id="COG0502">
    <property type="taxonomic scope" value="Bacteria"/>
</dbReference>
<dbReference type="HOGENOM" id="CLU_033172_1_2_5"/>
<dbReference type="OrthoDB" id="9786826at2"/>
<dbReference type="UniPathway" id="UPA00078">
    <property type="reaction ID" value="UER00162"/>
</dbReference>
<dbReference type="Proteomes" id="UP000001953">
    <property type="component" value="Chromosome"/>
</dbReference>
<dbReference type="GO" id="GO:0051537">
    <property type="term" value="F:2 iron, 2 sulfur cluster binding"/>
    <property type="evidence" value="ECO:0007669"/>
    <property type="project" value="UniProtKB-KW"/>
</dbReference>
<dbReference type="GO" id="GO:0051539">
    <property type="term" value="F:4 iron, 4 sulfur cluster binding"/>
    <property type="evidence" value="ECO:0007669"/>
    <property type="project" value="UniProtKB-KW"/>
</dbReference>
<dbReference type="GO" id="GO:0004076">
    <property type="term" value="F:biotin synthase activity"/>
    <property type="evidence" value="ECO:0007669"/>
    <property type="project" value="UniProtKB-UniRule"/>
</dbReference>
<dbReference type="GO" id="GO:0005506">
    <property type="term" value="F:iron ion binding"/>
    <property type="evidence" value="ECO:0007669"/>
    <property type="project" value="UniProtKB-UniRule"/>
</dbReference>
<dbReference type="GO" id="GO:0009102">
    <property type="term" value="P:biotin biosynthetic process"/>
    <property type="evidence" value="ECO:0007669"/>
    <property type="project" value="UniProtKB-UniRule"/>
</dbReference>
<dbReference type="CDD" id="cd01335">
    <property type="entry name" value="Radical_SAM"/>
    <property type="match status" value="1"/>
</dbReference>
<dbReference type="FunFam" id="3.20.20.70:FF:000026">
    <property type="entry name" value="Biotin synthase"/>
    <property type="match status" value="1"/>
</dbReference>
<dbReference type="Gene3D" id="3.20.20.70">
    <property type="entry name" value="Aldolase class I"/>
    <property type="match status" value="1"/>
</dbReference>
<dbReference type="HAMAP" id="MF_01694">
    <property type="entry name" value="BioB"/>
    <property type="match status" value="1"/>
</dbReference>
<dbReference type="InterPro" id="IPR013785">
    <property type="entry name" value="Aldolase_TIM"/>
</dbReference>
<dbReference type="InterPro" id="IPR010722">
    <property type="entry name" value="BATS_dom"/>
</dbReference>
<dbReference type="InterPro" id="IPR002684">
    <property type="entry name" value="Biotin_synth/BioAB"/>
</dbReference>
<dbReference type="InterPro" id="IPR024177">
    <property type="entry name" value="Biotin_synthase"/>
</dbReference>
<dbReference type="InterPro" id="IPR006638">
    <property type="entry name" value="Elp3/MiaA/NifB-like_rSAM"/>
</dbReference>
<dbReference type="InterPro" id="IPR007197">
    <property type="entry name" value="rSAM"/>
</dbReference>
<dbReference type="NCBIfam" id="TIGR00433">
    <property type="entry name" value="bioB"/>
    <property type="match status" value="1"/>
</dbReference>
<dbReference type="PANTHER" id="PTHR22976">
    <property type="entry name" value="BIOTIN SYNTHASE"/>
    <property type="match status" value="1"/>
</dbReference>
<dbReference type="PANTHER" id="PTHR22976:SF2">
    <property type="entry name" value="BIOTIN SYNTHASE, MITOCHONDRIAL"/>
    <property type="match status" value="1"/>
</dbReference>
<dbReference type="Pfam" id="PF06968">
    <property type="entry name" value="BATS"/>
    <property type="match status" value="1"/>
</dbReference>
<dbReference type="Pfam" id="PF04055">
    <property type="entry name" value="Radical_SAM"/>
    <property type="match status" value="1"/>
</dbReference>
<dbReference type="PIRSF" id="PIRSF001619">
    <property type="entry name" value="Biotin_synth"/>
    <property type="match status" value="1"/>
</dbReference>
<dbReference type="SFLD" id="SFLDF00272">
    <property type="entry name" value="biotin_synthase"/>
    <property type="match status" value="1"/>
</dbReference>
<dbReference type="SFLD" id="SFLDG01278">
    <property type="entry name" value="biotin_synthase_like"/>
    <property type="match status" value="1"/>
</dbReference>
<dbReference type="SMART" id="SM00876">
    <property type="entry name" value="BATS"/>
    <property type="match status" value="1"/>
</dbReference>
<dbReference type="SMART" id="SM00729">
    <property type="entry name" value="Elp3"/>
    <property type="match status" value="1"/>
</dbReference>
<dbReference type="SUPFAM" id="SSF102114">
    <property type="entry name" value="Radical SAM enzymes"/>
    <property type="match status" value="1"/>
</dbReference>
<dbReference type="PROSITE" id="PS51918">
    <property type="entry name" value="RADICAL_SAM"/>
    <property type="match status" value="1"/>
</dbReference>
<reference key="1">
    <citation type="submission" date="2006-03" db="EMBL/GenBank/DDBJ databases">
        <title>Complete sequence of chromosome of Nitrobacter hamburgensis X14.</title>
        <authorList>
            <consortium name="US DOE Joint Genome Institute"/>
            <person name="Copeland A."/>
            <person name="Lucas S."/>
            <person name="Lapidus A."/>
            <person name="Barry K."/>
            <person name="Detter J.C."/>
            <person name="Glavina del Rio T."/>
            <person name="Hammon N."/>
            <person name="Israni S."/>
            <person name="Dalin E."/>
            <person name="Tice H."/>
            <person name="Pitluck S."/>
            <person name="Chain P."/>
            <person name="Malfatti S."/>
            <person name="Shin M."/>
            <person name="Vergez L."/>
            <person name="Schmutz J."/>
            <person name="Larimer F."/>
            <person name="Land M."/>
            <person name="Hauser L."/>
            <person name="Kyrpides N."/>
            <person name="Ivanova N."/>
            <person name="Ward B."/>
            <person name="Arp D."/>
            <person name="Klotz M."/>
            <person name="Stein L."/>
            <person name="O'Mullan G."/>
            <person name="Starkenburg S."/>
            <person name="Sayavedra L."/>
            <person name="Poret-Peterson A.T."/>
            <person name="Gentry M.E."/>
            <person name="Bruce D."/>
            <person name="Richardson P."/>
        </authorList>
    </citation>
    <scope>NUCLEOTIDE SEQUENCE [LARGE SCALE GENOMIC DNA]</scope>
    <source>
        <strain>DSM 10229 / NCIMB 13809 / X14</strain>
    </source>
</reference>
<comment type="function">
    <text evidence="1">Catalyzes the conversion of dethiobiotin (DTB) to biotin by the insertion of a sulfur atom into dethiobiotin via a radical-based mechanism.</text>
</comment>
<comment type="catalytic activity">
    <reaction evidence="1">
        <text>(4R,5S)-dethiobiotin + (sulfur carrier)-SH + 2 reduced [2Fe-2S]-[ferredoxin] + 2 S-adenosyl-L-methionine = (sulfur carrier)-H + biotin + 2 5'-deoxyadenosine + 2 L-methionine + 2 oxidized [2Fe-2S]-[ferredoxin]</text>
        <dbReference type="Rhea" id="RHEA:22060"/>
        <dbReference type="Rhea" id="RHEA-COMP:10000"/>
        <dbReference type="Rhea" id="RHEA-COMP:10001"/>
        <dbReference type="Rhea" id="RHEA-COMP:14737"/>
        <dbReference type="Rhea" id="RHEA-COMP:14739"/>
        <dbReference type="ChEBI" id="CHEBI:17319"/>
        <dbReference type="ChEBI" id="CHEBI:29917"/>
        <dbReference type="ChEBI" id="CHEBI:33737"/>
        <dbReference type="ChEBI" id="CHEBI:33738"/>
        <dbReference type="ChEBI" id="CHEBI:57586"/>
        <dbReference type="ChEBI" id="CHEBI:57844"/>
        <dbReference type="ChEBI" id="CHEBI:59789"/>
        <dbReference type="ChEBI" id="CHEBI:64428"/>
        <dbReference type="ChEBI" id="CHEBI:149473"/>
        <dbReference type="EC" id="2.8.1.6"/>
    </reaction>
</comment>
<comment type="cofactor">
    <cofactor evidence="1">
        <name>[4Fe-4S] cluster</name>
        <dbReference type="ChEBI" id="CHEBI:49883"/>
    </cofactor>
    <text evidence="1">Binds 1 [4Fe-4S] cluster. The cluster is coordinated with 3 cysteines and an exchangeable S-adenosyl-L-methionine.</text>
</comment>
<comment type="cofactor">
    <cofactor evidence="1">
        <name>[2Fe-2S] cluster</name>
        <dbReference type="ChEBI" id="CHEBI:190135"/>
    </cofactor>
    <text evidence="1">Binds 1 [2Fe-2S] cluster. The cluster is coordinated with 3 cysteines and 1 arginine.</text>
</comment>
<comment type="pathway">
    <text evidence="1">Cofactor biosynthesis; biotin biosynthesis; biotin from 7,8-diaminononanoate: step 2/2.</text>
</comment>
<comment type="subunit">
    <text evidence="1">Homodimer.</text>
</comment>
<comment type="similarity">
    <text evidence="1">Belongs to the radical SAM superfamily. Biotin synthase family.</text>
</comment>
<feature type="chain" id="PRO_0000381502" description="Biotin synthase">
    <location>
        <begin position="1"/>
        <end position="340"/>
    </location>
</feature>
<feature type="domain" description="Radical SAM core" evidence="2">
    <location>
        <begin position="53"/>
        <end position="272"/>
    </location>
</feature>
<feature type="region of interest" description="Disordered" evidence="3">
    <location>
        <begin position="1"/>
        <end position="21"/>
    </location>
</feature>
<feature type="binding site" evidence="1">
    <location>
        <position position="68"/>
    </location>
    <ligand>
        <name>[4Fe-4S] cluster</name>
        <dbReference type="ChEBI" id="CHEBI:49883"/>
        <note>4Fe-4S-S-AdoMet</note>
    </ligand>
</feature>
<feature type="binding site" evidence="1">
    <location>
        <position position="72"/>
    </location>
    <ligand>
        <name>[4Fe-4S] cluster</name>
        <dbReference type="ChEBI" id="CHEBI:49883"/>
        <note>4Fe-4S-S-AdoMet</note>
    </ligand>
</feature>
<feature type="binding site" evidence="1">
    <location>
        <position position="75"/>
    </location>
    <ligand>
        <name>[4Fe-4S] cluster</name>
        <dbReference type="ChEBI" id="CHEBI:49883"/>
        <note>4Fe-4S-S-AdoMet</note>
    </ligand>
</feature>
<feature type="binding site" evidence="1">
    <location>
        <position position="112"/>
    </location>
    <ligand>
        <name>[2Fe-2S] cluster</name>
        <dbReference type="ChEBI" id="CHEBI:190135"/>
    </ligand>
</feature>
<feature type="binding site" evidence="1">
    <location>
        <position position="143"/>
    </location>
    <ligand>
        <name>[2Fe-2S] cluster</name>
        <dbReference type="ChEBI" id="CHEBI:190135"/>
    </ligand>
</feature>
<feature type="binding site" evidence="1">
    <location>
        <position position="203"/>
    </location>
    <ligand>
        <name>[2Fe-2S] cluster</name>
        <dbReference type="ChEBI" id="CHEBI:190135"/>
    </ligand>
</feature>
<feature type="binding site" evidence="1">
    <location>
        <position position="276"/>
    </location>
    <ligand>
        <name>[2Fe-2S] cluster</name>
        <dbReference type="ChEBI" id="CHEBI:190135"/>
    </ligand>
</feature>
<sequence length="340" mass="37327">MDAASVSFGSGHDLSSQPRHDWTRSEAETLYNLPFADLIFQAQTLHRRHFDPNHVETANLLSIKTGGCPEDCGYCSQSAHYDSGVKATKLMDREAVIETARRARDAGASRFCMAAAWRNPKDRDLDRVCDMVSAVKELGLETCATLGMLTPDQARRLHDAGLDFYNHNVDTSPEFYGNIITTRTMQDRIDTLAHAREAGLKVCCGGIIGLGEQVGDRLGMLMLLANLPAHPESVPINMWNEVKSVPVNDTAERPDPIALVRMIAVARIMMPRSVVRLSAGRQYMTDELQALCFLAGANSIFIGDVLLTTKNPQTARDAALLDRLGIRSRLDDAKAAAPPH</sequence>